<gene>
    <name evidence="1" type="primary">rsmG</name>
    <name type="ordered locus">Shewmr4_3935</name>
</gene>
<dbReference type="EC" id="2.1.1.170" evidence="1"/>
<dbReference type="EMBL" id="CP000446">
    <property type="protein sequence ID" value="ABI40998.1"/>
    <property type="molecule type" value="Genomic_DNA"/>
</dbReference>
<dbReference type="RefSeq" id="WP_011624655.1">
    <property type="nucleotide sequence ID" value="NC_008321.1"/>
</dbReference>
<dbReference type="SMR" id="Q0HD69"/>
<dbReference type="KEGG" id="she:Shewmr4_3935"/>
<dbReference type="HOGENOM" id="CLU_065341_2_0_6"/>
<dbReference type="GO" id="GO:0005829">
    <property type="term" value="C:cytosol"/>
    <property type="evidence" value="ECO:0007669"/>
    <property type="project" value="TreeGrafter"/>
</dbReference>
<dbReference type="GO" id="GO:0070043">
    <property type="term" value="F:rRNA (guanine-N7-)-methyltransferase activity"/>
    <property type="evidence" value="ECO:0007669"/>
    <property type="project" value="UniProtKB-UniRule"/>
</dbReference>
<dbReference type="CDD" id="cd02440">
    <property type="entry name" value="AdoMet_MTases"/>
    <property type="match status" value="1"/>
</dbReference>
<dbReference type="FunFam" id="3.40.50.150:FF:000032">
    <property type="entry name" value="Ribosomal RNA small subunit methyltransferase G"/>
    <property type="match status" value="1"/>
</dbReference>
<dbReference type="Gene3D" id="3.40.50.150">
    <property type="entry name" value="Vaccinia Virus protein VP39"/>
    <property type="match status" value="1"/>
</dbReference>
<dbReference type="HAMAP" id="MF_00074">
    <property type="entry name" value="16SrRNA_methyltr_G"/>
    <property type="match status" value="1"/>
</dbReference>
<dbReference type="InterPro" id="IPR003682">
    <property type="entry name" value="rRNA_ssu_MeTfrase_G"/>
</dbReference>
<dbReference type="InterPro" id="IPR029063">
    <property type="entry name" value="SAM-dependent_MTases_sf"/>
</dbReference>
<dbReference type="NCBIfam" id="TIGR00138">
    <property type="entry name" value="rsmG_gidB"/>
    <property type="match status" value="1"/>
</dbReference>
<dbReference type="PANTHER" id="PTHR31760">
    <property type="entry name" value="S-ADENOSYL-L-METHIONINE-DEPENDENT METHYLTRANSFERASES SUPERFAMILY PROTEIN"/>
    <property type="match status" value="1"/>
</dbReference>
<dbReference type="PANTHER" id="PTHR31760:SF0">
    <property type="entry name" value="S-ADENOSYL-L-METHIONINE-DEPENDENT METHYLTRANSFERASES SUPERFAMILY PROTEIN"/>
    <property type="match status" value="1"/>
</dbReference>
<dbReference type="Pfam" id="PF02527">
    <property type="entry name" value="GidB"/>
    <property type="match status" value="1"/>
</dbReference>
<dbReference type="PIRSF" id="PIRSF003078">
    <property type="entry name" value="GidB"/>
    <property type="match status" value="1"/>
</dbReference>
<dbReference type="SUPFAM" id="SSF53335">
    <property type="entry name" value="S-adenosyl-L-methionine-dependent methyltransferases"/>
    <property type="match status" value="1"/>
</dbReference>
<protein>
    <recommendedName>
        <fullName evidence="1">Ribosomal RNA small subunit methyltransferase G</fullName>
        <ecNumber evidence="1">2.1.1.170</ecNumber>
    </recommendedName>
    <alternativeName>
        <fullName evidence="1">16S rRNA 7-methylguanosine methyltransferase</fullName>
        <shortName evidence="1">16S rRNA m7G methyltransferase</shortName>
    </alternativeName>
</protein>
<accession>Q0HD69</accession>
<comment type="function">
    <text evidence="1">Specifically methylates the N7 position of guanine in position 527 of 16S rRNA.</text>
</comment>
<comment type="catalytic activity">
    <reaction evidence="1">
        <text>guanosine(527) in 16S rRNA + S-adenosyl-L-methionine = N(7)-methylguanosine(527) in 16S rRNA + S-adenosyl-L-homocysteine</text>
        <dbReference type="Rhea" id="RHEA:42732"/>
        <dbReference type="Rhea" id="RHEA-COMP:10209"/>
        <dbReference type="Rhea" id="RHEA-COMP:10210"/>
        <dbReference type="ChEBI" id="CHEBI:57856"/>
        <dbReference type="ChEBI" id="CHEBI:59789"/>
        <dbReference type="ChEBI" id="CHEBI:74269"/>
        <dbReference type="ChEBI" id="CHEBI:74480"/>
        <dbReference type="EC" id="2.1.1.170"/>
    </reaction>
</comment>
<comment type="subcellular location">
    <subcellularLocation>
        <location evidence="1">Cytoplasm</location>
    </subcellularLocation>
</comment>
<comment type="similarity">
    <text evidence="1">Belongs to the methyltransferase superfamily. RNA methyltransferase RsmG family.</text>
</comment>
<sequence length="206" mass="23297">MLSAQLEAYLAEINLPATAEQKKQLLDFVGMLNKWNKAYNLTSVRDPEAMLVRHIMDSLVVSPHLQGERFIDVGTGPGLPGIPLAIMNPDKTFVLLDSLGKRIRFQKQVAFELGIHNISSIESRVEAYQPEQKFDGVLSRAFASIHDMLTWCHHLPAEHGQFYALKGQLSDEEMQQIPAGFVVTETIELKVPRLDEQRHLLKIIKE</sequence>
<name>RSMG_SHESM</name>
<feature type="chain" id="PRO_1000010204" description="Ribosomal RNA small subunit methyltransferase G">
    <location>
        <begin position="1"/>
        <end position="206"/>
    </location>
</feature>
<feature type="binding site" evidence="1">
    <location>
        <position position="74"/>
    </location>
    <ligand>
        <name>S-adenosyl-L-methionine</name>
        <dbReference type="ChEBI" id="CHEBI:59789"/>
    </ligand>
</feature>
<feature type="binding site" evidence="1">
    <location>
        <position position="79"/>
    </location>
    <ligand>
        <name>S-adenosyl-L-methionine</name>
        <dbReference type="ChEBI" id="CHEBI:59789"/>
    </ligand>
</feature>
<feature type="binding site" evidence="1">
    <location>
        <begin position="125"/>
        <end position="126"/>
    </location>
    <ligand>
        <name>S-adenosyl-L-methionine</name>
        <dbReference type="ChEBI" id="CHEBI:59789"/>
    </ligand>
</feature>
<feature type="binding site" evidence="1">
    <location>
        <position position="140"/>
    </location>
    <ligand>
        <name>S-adenosyl-L-methionine</name>
        <dbReference type="ChEBI" id="CHEBI:59789"/>
    </ligand>
</feature>
<evidence type="ECO:0000255" key="1">
    <source>
        <dbReference type="HAMAP-Rule" id="MF_00074"/>
    </source>
</evidence>
<reference key="1">
    <citation type="submission" date="2006-08" db="EMBL/GenBank/DDBJ databases">
        <title>Complete sequence of Shewanella sp. MR-4.</title>
        <authorList>
            <consortium name="US DOE Joint Genome Institute"/>
            <person name="Copeland A."/>
            <person name="Lucas S."/>
            <person name="Lapidus A."/>
            <person name="Barry K."/>
            <person name="Detter J.C."/>
            <person name="Glavina del Rio T."/>
            <person name="Hammon N."/>
            <person name="Israni S."/>
            <person name="Dalin E."/>
            <person name="Tice H."/>
            <person name="Pitluck S."/>
            <person name="Kiss H."/>
            <person name="Brettin T."/>
            <person name="Bruce D."/>
            <person name="Han C."/>
            <person name="Tapia R."/>
            <person name="Gilna P."/>
            <person name="Schmutz J."/>
            <person name="Larimer F."/>
            <person name="Land M."/>
            <person name="Hauser L."/>
            <person name="Kyrpides N."/>
            <person name="Mikhailova N."/>
            <person name="Nealson K."/>
            <person name="Konstantinidis K."/>
            <person name="Klappenbach J."/>
            <person name="Tiedje J."/>
            <person name="Richardson P."/>
        </authorList>
    </citation>
    <scope>NUCLEOTIDE SEQUENCE [LARGE SCALE GENOMIC DNA]</scope>
    <source>
        <strain>MR-4</strain>
    </source>
</reference>
<proteinExistence type="inferred from homology"/>
<organism>
    <name type="scientific">Shewanella sp. (strain MR-4)</name>
    <dbReference type="NCBI Taxonomy" id="60480"/>
    <lineage>
        <taxon>Bacteria</taxon>
        <taxon>Pseudomonadati</taxon>
        <taxon>Pseudomonadota</taxon>
        <taxon>Gammaproteobacteria</taxon>
        <taxon>Alteromonadales</taxon>
        <taxon>Shewanellaceae</taxon>
        <taxon>Shewanella</taxon>
    </lineage>
</organism>
<keyword id="KW-0963">Cytoplasm</keyword>
<keyword id="KW-0489">Methyltransferase</keyword>
<keyword id="KW-0698">rRNA processing</keyword>
<keyword id="KW-0949">S-adenosyl-L-methionine</keyword>
<keyword id="KW-0808">Transferase</keyword>